<proteinExistence type="evidence at protein level"/>
<accession>P0DPV6</accession>
<organism>
    <name type="scientific">Scolopendra dehaani</name>
    <name type="common">Thai centipede</name>
    <name type="synonym">Scolopendra subspinipes dehaani</name>
    <dbReference type="NCBI Taxonomy" id="2609776"/>
    <lineage>
        <taxon>Eukaryota</taxon>
        <taxon>Metazoa</taxon>
        <taxon>Ecdysozoa</taxon>
        <taxon>Arthropoda</taxon>
        <taxon>Myriapoda</taxon>
        <taxon>Chilopoda</taxon>
        <taxon>Pleurostigmophora</taxon>
        <taxon>Scolopendromorpha</taxon>
        <taxon>Scolopendridae</taxon>
        <taxon>Scolopendra</taxon>
    </lineage>
</organism>
<evidence type="ECO:0000250" key="1">
    <source>
        <dbReference type="UniProtKB" id="A0A2L0ART2"/>
    </source>
</evidence>
<evidence type="ECO:0000269" key="2">
    <source>
    </source>
</evidence>
<evidence type="ECO:0000303" key="3">
    <source>
    </source>
</evidence>
<evidence type="ECO:0000305" key="4"/>
<evidence type="ECO:0000305" key="5">
    <source>
    </source>
</evidence>
<comment type="function">
    <text evidence="1">Acts as a voltage-gated potassium channel inhibitor.</text>
</comment>
<comment type="subcellular location">
    <subcellularLocation>
        <location evidence="2">Secreted</location>
    </subcellularLocation>
</comment>
<comment type="tissue specificity">
    <text evidence="5">Expressed by the venom gland.</text>
</comment>
<comment type="PTM">
    <text evidence="4">Contains 2 disulfide bonds.</text>
</comment>
<comment type="mass spectrometry" mass="6102.0" method="MALDI" evidence="2"/>
<comment type="similarity">
    <text evidence="4">Belongs to the scoloptoxin-15 family.</text>
</comment>
<protein>
    <recommendedName>
        <fullName evidence="4">Kappa-scoloptoxin(15)-Ssd3a</fullName>
        <shortName evidence="4">Kappa-SLPTX(15)-Ssd3</shortName>
    </recommendedName>
    <alternativeName>
        <fullName evidence="3">Toxin SSD893</fullName>
    </alternativeName>
</protein>
<feature type="signal peptide" evidence="2">
    <location>
        <begin position="1"/>
        <end position="23"/>
    </location>
</feature>
<feature type="chain" id="PRO_0000446798" description="Kappa-scoloptoxin(15)-Ssd3a" evidence="4">
    <location>
        <begin position="24"/>
        <end position="76"/>
    </location>
</feature>
<sequence length="76" mass="8666">MEGKIIFICFLVVLLTLPELISSEVIRKEIPYKKRKFPYKSECRKACATAFTGGDESRIKDVKPGFFKCSCYYSSG</sequence>
<reference key="1">
    <citation type="journal article" date="2012" name="J. Proteome Res.">
        <title>Venomic and transcriptomic analysis of centipede Scolopendra subspinipes dehaani.</title>
        <authorList>
            <person name="Liu Z.C."/>
            <person name="Zhang R."/>
            <person name="Zhao F."/>
            <person name="Chen Z.M."/>
            <person name="Liu H.W."/>
            <person name="Wang Y.J."/>
            <person name="Jiang P."/>
            <person name="Zhang Y."/>
            <person name="Wu Y."/>
            <person name="Ding J.P."/>
            <person name="Lee W.H."/>
            <person name="Zhang Y."/>
        </authorList>
    </citation>
    <scope>NUCLEOTIDE SEQUENCE [MRNA]</scope>
    <scope>PROTEIN SEQUENCE OF 24-42</scope>
    <scope>SUBCELLULAR LOCATION</scope>
    <scope>MASS SPECTROMETRY</scope>
    <source>
        <tissue>Venom</tissue>
        <tissue>Venom gland</tissue>
    </source>
</reference>
<dbReference type="EMBL" id="KC144884">
    <property type="status" value="NOT_ANNOTATED_CDS"/>
    <property type="molecule type" value="mRNA"/>
</dbReference>
<dbReference type="SMR" id="P0DPV6"/>
<dbReference type="GO" id="GO:0005576">
    <property type="term" value="C:extracellular region"/>
    <property type="evidence" value="ECO:0007669"/>
    <property type="project" value="UniProtKB-SubCell"/>
</dbReference>
<dbReference type="GO" id="GO:0015459">
    <property type="term" value="F:potassium channel regulator activity"/>
    <property type="evidence" value="ECO:0007669"/>
    <property type="project" value="UniProtKB-KW"/>
</dbReference>
<dbReference type="GO" id="GO:0090729">
    <property type="term" value="F:toxin activity"/>
    <property type="evidence" value="ECO:0007669"/>
    <property type="project" value="UniProtKB-KW"/>
</dbReference>
<keyword id="KW-0903">Direct protein sequencing</keyword>
<keyword id="KW-1015">Disulfide bond</keyword>
<keyword id="KW-0872">Ion channel impairing toxin</keyword>
<keyword id="KW-0632">Potassium channel impairing toxin</keyword>
<keyword id="KW-0964">Secreted</keyword>
<keyword id="KW-0732">Signal</keyword>
<keyword id="KW-0800">Toxin</keyword>
<keyword id="KW-1220">Voltage-gated potassium channel impairing toxin</keyword>
<name>TXF3A_SCODE</name>